<gene>
    <name evidence="1" type="primary">BNA1</name>
    <name type="ORF">PGUG_04264</name>
</gene>
<protein>
    <recommendedName>
        <fullName evidence="1">3-hydroxyanthranilate 3,4-dioxygenase</fullName>
        <ecNumber evidence="1">1.13.11.6</ecNumber>
    </recommendedName>
    <alternativeName>
        <fullName evidence="1">3-hydroxyanthranilate oxygenase</fullName>
        <shortName evidence="1">3-HAO</shortName>
    </alternativeName>
    <alternativeName>
        <fullName evidence="1">3-hydroxyanthranilic acid dioxygenase</fullName>
        <shortName evidence="1">HAD</shortName>
    </alternativeName>
    <alternativeName>
        <fullName evidence="1">Biosynthesis of nicotinic acid protein 1</fullName>
    </alternativeName>
</protein>
<organism>
    <name type="scientific">Meyerozyma guilliermondii (strain ATCC 6260 / CBS 566 / DSM 6381 / JCM 1539 / NBRC 10279 / NRRL Y-324)</name>
    <name type="common">Yeast</name>
    <name type="synonym">Candida guilliermondii</name>
    <dbReference type="NCBI Taxonomy" id="294746"/>
    <lineage>
        <taxon>Eukaryota</taxon>
        <taxon>Fungi</taxon>
        <taxon>Dikarya</taxon>
        <taxon>Ascomycota</taxon>
        <taxon>Saccharomycotina</taxon>
        <taxon>Pichiomycetes</taxon>
        <taxon>Debaryomycetaceae</taxon>
        <taxon>Meyerozyma</taxon>
    </lineage>
</organism>
<keyword id="KW-0963">Cytoplasm</keyword>
<keyword id="KW-0223">Dioxygenase</keyword>
<keyword id="KW-0408">Iron</keyword>
<keyword id="KW-0479">Metal-binding</keyword>
<keyword id="KW-0560">Oxidoreductase</keyword>
<keyword id="KW-0662">Pyridine nucleotide biosynthesis</keyword>
<keyword id="KW-1185">Reference proteome</keyword>
<reference key="1">
    <citation type="journal article" date="2009" name="Nature">
        <title>Evolution of pathogenicity and sexual reproduction in eight Candida genomes.</title>
        <authorList>
            <person name="Butler G."/>
            <person name="Rasmussen M.D."/>
            <person name="Lin M.F."/>
            <person name="Santos M.A.S."/>
            <person name="Sakthikumar S."/>
            <person name="Munro C.A."/>
            <person name="Rheinbay E."/>
            <person name="Grabherr M."/>
            <person name="Forche A."/>
            <person name="Reedy J.L."/>
            <person name="Agrafioti I."/>
            <person name="Arnaud M.B."/>
            <person name="Bates S."/>
            <person name="Brown A.J.P."/>
            <person name="Brunke S."/>
            <person name="Costanzo M.C."/>
            <person name="Fitzpatrick D.A."/>
            <person name="de Groot P.W.J."/>
            <person name="Harris D."/>
            <person name="Hoyer L.L."/>
            <person name="Hube B."/>
            <person name="Klis F.M."/>
            <person name="Kodira C."/>
            <person name="Lennard N."/>
            <person name="Logue M.E."/>
            <person name="Martin R."/>
            <person name="Neiman A.M."/>
            <person name="Nikolaou E."/>
            <person name="Quail M.A."/>
            <person name="Quinn J."/>
            <person name="Santos M.C."/>
            <person name="Schmitzberger F.F."/>
            <person name="Sherlock G."/>
            <person name="Shah P."/>
            <person name="Silverstein K.A.T."/>
            <person name="Skrzypek M.S."/>
            <person name="Soll D."/>
            <person name="Staggs R."/>
            <person name="Stansfield I."/>
            <person name="Stumpf M.P.H."/>
            <person name="Sudbery P.E."/>
            <person name="Srikantha T."/>
            <person name="Zeng Q."/>
            <person name="Berman J."/>
            <person name="Berriman M."/>
            <person name="Heitman J."/>
            <person name="Gow N.A.R."/>
            <person name="Lorenz M.C."/>
            <person name="Birren B.W."/>
            <person name="Kellis M."/>
            <person name="Cuomo C.A."/>
        </authorList>
    </citation>
    <scope>NUCLEOTIDE SEQUENCE [LARGE SCALE GENOMIC DNA]</scope>
    <source>
        <strain>ATCC 6260 / CBS 566 / DSM 6381 / JCM 1539 / NBRC 10279 / NRRL Y-324</strain>
    </source>
</reference>
<evidence type="ECO:0000255" key="1">
    <source>
        <dbReference type="HAMAP-Rule" id="MF_03019"/>
    </source>
</evidence>
<feature type="chain" id="PRO_0000361992" description="3-hydroxyanthranilate 3,4-dioxygenase">
    <location>
        <begin position="1"/>
        <end position="169"/>
    </location>
</feature>
<feature type="binding site" evidence="1">
    <location>
        <position position="44"/>
    </location>
    <ligand>
        <name>O2</name>
        <dbReference type="ChEBI" id="CHEBI:15379"/>
    </ligand>
</feature>
<feature type="binding site" evidence="1">
    <location>
        <position position="48"/>
    </location>
    <ligand>
        <name>Fe cation</name>
        <dbReference type="ChEBI" id="CHEBI:24875"/>
        <note>catalytic</note>
    </ligand>
</feature>
<feature type="binding site" evidence="1">
    <location>
        <position position="54"/>
    </location>
    <ligand>
        <name>Fe cation</name>
        <dbReference type="ChEBI" id="CHEBI:24875"/>
        <note>catalytic</note>
    </ligand>
</feature>
<feature type="binding site" evidence="1">
    <location>
        <position position="54"/>
    </location>
    <ligand>
        <name>substrate</name>
    </ligand>
</feature>
<feature type="binding site" evidence="1">
    <location>
        <position position="92"/>
    </location>
    <ligand>
        <name>Fe cation</name>
        <dbReference type="ChEBI" id="CHEBI:24875"/>
        <note>catalytic</note>
    </ligand>
</feature>
<feature type="binding site" evidence="1">
    <location>
        <position position="96"/>
    </location>
    <ligand>
        <name>substrate</name>
    </ligand>
</feature>
<feature type="binding site" evidence="1">
    <location>
        <position position="106"/>
    </location>
    <ligand>
        <name>substrate</name>
    </ligand>
</feature>
<feature type="binding site" evidence="1">
    <location>
        <position position="121"/>
    </location>
    <ligand>
        <name>a divalent metal cation</name>
        <dbReference type="ChEBI" id="CHEBI:60240"/>
    </ligand>
</feature>
<feature type="binding site" evidence="1">
    <location>
        <position position="124"/>
    </location>
    <ligand>
        <name>a divalent metal cation</name>
        <dbReference type="ChEBI" id="CHEBI:60240"/>
    </ligand>
</feature>
<feature type="binding site" evidence="1">
    <location>
        <position position="158"/>
    </location>
    <ligand>
        <name>a divalent metal cation</name>
        <dbReference type="ChEBI" id="CHEBI:60240"/>
    </ligand>
</feature>
<feature type="binding site" evidence="1">
    <location>
        <position position="160"/>
    </location>
    <ligand>
        <name>a divalent metal cation</name>
        <dbReference type="ChEBI" id="CHEBI:60240"/>
    </ligand>
</feature>
<comment type="function">
    <text evidence="1">Catalyzes the oxidative ring opening of 3-hydroxyanthranilate to 2-amino-3-carboxymuconate semialdehyde, which spontaneously cyclizes to quinolinate.</text>
</comment>
<comment type="catalytic activity">
    <reaction evidence="1">
        <text>3-hydroxyanthranilate + O2 = (2Z,4Z)-2-amino-3-carboxymuconate 6-semialdehyde</text>
        <dbReference type="Rhea" id="RHEA:17953"/>
        <dbReference type="ChEBI" id="CHEBI:15379"/>
        <dbReference type="ChEBI" id="CHEBI:36559"/>
        <dbReference type="ChEBI" id="CHEBI:77612"/>
        <dbReference type="EC" id="1.13.11.6"/>
    </reaction>
</comment>
<comment type="cofactor">
    <cofactor evidence="1">
        <name>Fe(2+)</name>
        <dbReference type="ChEBI" id="CHEBI:29033"/>
    </cofactor>
</comment>
<comment type="pathway">
    <text evidence="1">Cofactor biosynthesis; NAD(+) biosynthesis; quinolinate from L-kynurenine: step 3/3.</text>
</comment>
<comment type="subcellular location">
    <subcellularLocation>
        <location evidence="1">Cytoplasm</location>
    </subcellularLocation>
</comment>
<comment type="similarity">
    <text evidence="1">Belongs to the 3-HAO family.</text>
</comment>
<dbReference type="EC" id="1.13.11.6" evidence="1"/>
<dbReference type="EMBL" id="CH408159">
    <property type="protein sequence ID" value="EDK40166.2"/>
    <property type="molecule type" value="Genomic_DNA"/>
</dbReference>
<dbReference type="RefSeq" id="XP_001483535.1">
    <property type="nucleotide sequence ID" value="XM_001483485.1"/>
</dbReference>
<dbReference type="SMR" id="A5DLW3"/>
<dbReference type="FunCoup" id="A5DLW3">
    <property type="interactions" value="156"/>
</dbReference>
<dbReference type="STRING" id="294746.A5DLW3"/>
<dbReference type="GeneID" id="5125307"/>
<dbReference type="KEGG" id="pgu:PGUG_04264"/>
<dbReference type="VEuPathDB" id="FungiDB:PGUG_04264"/>
<dbReference type="eggNOG" id="KOG3995">
    <property type="taxonomic scope" value="Eukaryota"/>
</dbReference>
<dbReference type="HOGENOM" id="CLU_095765_0_0_1"/>
<dbReference type="InParanoid" id="A5DLW3"/>
<dbReference type="OMA" id="KPPVGNQ"/>
<dbReference type="OrthoDB" id="204928at2759"/>
<dbReference type="UniPathway" id="UPA00253">
    <property type="reaction ID" value="UER00330"/>
</dbReference>
<dbReference type="Proteomes" id="UP000001997">
    <property type="component" value="Unassembled WGS sequence"/>
</dbReference>
<dbReference type="GO" id="GO:0005737">
    <property type="term" value="C:cytoplasm"/>
    <property type="evidence" value="ECO:0007669"/>
    <property type="project" value="UniProtKB-SubCell"/>
</dbReference>
<dbReference type="GO" id="GO:0000334">
    <property type="term" value="F:3-hydroxyanthranilate 3,4-dioxygenase activity"/>
    <property type="evidence" value="ECO:0007669"/>
    <property type="project" value="UniProtKB-UniRule"/>
</dbReference>
<dbReference type="GO" id="GO:0008198">
    <property type="term" value="F:ferrous iron binding"/>
    <property type="evidence" value="ECO:0007669"/>
    <property type="project" value="UniProtKB-UniRule"/>
</dbReference>
<dbReference type="GO" id="GO:0034354">
    <property type="term" value="P:'de novo' NAD biosynthetic process from L-tryptophan"/>
    <property type="evidence" value="ECO:0007669"/>
    <property type="project" value="UniProtKB-UniRule"/>
</dbReference>
<dbReference type="GO" id="GO:0043420">
    <property type="term" value="P:anthranilate metabolic process"/>
    <property type="evidence" value="ECO:0007669"/>
    <property type="project" value="UniProtKB-UniRule"/>
</dbReference>
<dbReference type="GO" id="GO:0006569">
    <property type="term" value="P:L-tryptophan catabolic process"/>
    <property type="evidence" value="ECO:0007669"/>
    <property type="project" value="UniProtKB-UniRule"/>
</dbReference>
<dbReference type="GO" id="GO:0019805">
    <property type="term" value="P:quinolinate biosynthetic process"/>
    <property type="evidence" value="ECO:0007669"/>
    <property type="project" value="UniProtKB-UniRule"/>
</dbReference>
<dbReference type="CDD" id="cd06123">
    <property type="entry name" value="cupin_HAO"/>
    <property type="match status" value="1"/>
</dbReference>
<dbReference type="FunFam" id="2.60.120.10:FF:000093">
    <property type="entry name" value="3-hydroxyanthranilate 3,4-dioxygenase"/>
    <property type="match status" value="1"/>
</dbReference>
<dbReference type="Gene3D" id="2.60.120.10">
    <property type="entry name" value="Jelly Rolls"/>
    <property type="match status" value="1"/>
</dbReference>
<dbReference type="HAMAP" id="MF_00825">
    <property type="entry name" value="3_HAO"/>
    <property type="match status" value="1"/>
</dbReference>
<dbReference type="InterPro" id="IPR010329">
    <property type="entry name" value="3hydroanth_dOase"/>
</dbReference>
<dbReference type="InterPro" id="IPR014710">
    <property type="entry name" value="RmlC-like_jellyroll"/>
</dbReference>
<dbReference type="InterPro" id="IPR011051">
    <property type="entry name" value="RmlC_Cupin_sf"/>
</dbReference>
<dbReference type="NCBIfam" id="TIGR03037">
    <property type="entry name" value="anthran_nbaC"/>
    <property type="match status" value="1"/>
</dbReference>
<dbReference type="PANTHER" id="PTHR15497">
    <property type="entry name" value="3-HYDROXYANTHRANILATE 3,4-DIOXYGENASE"/>
    <property type="match status" value="1"/>
</dbReference>
<dbReference type="PANTHER" id="PTHR15497:SF1">
    <property type="entry name" value="3-HYDROXYANTHRANILATE 3,4-DIOXYGENASE"/>
    <property type="match status" value="1"/>
</dbReference>
<dbReference type="Pfam" id="PF06052">
    <property type="entry name" value="3-HAO"/>
    <property type="match status" value="1"/>
</dbReference>
<dbReference type="SUPFAM" id="SSF51182">
    <property type="entry name" value="RmlC-like cupins"/>
    <property type="match status" value="1"/>
</dbReference>
<sequence>MLAEPINLQSWISENKDLLQPPVNNYCLHRGGATVMIVGGPNERTDYHVNQTPEYFHQIKGDMTLKVVDDGKFRDITIREGDSFLLPGNVPHNPVRYADTIGLVVEQDRPKGVNDKIRWYCSNCREIVHQVEFYCYDLGTQVKDAILAFDGDDEARTCKCGTYNYSRPN</sequence>
<accession>A5DLW3</accession>
<proteinExistence type="inferred from homology"/>
<name>3HAO_PICGU</name>